<organism>
    <name type="scientific">Pseudomonas aeruginosa (strain ATCC 15692 / DSM 22644 / CIP 104116 / JCM 14847 / LMG 12228 / 1C / PRS 101 / PAO1)</name>
    <dbReference type="NCBI Taxonomy" id="208964"/>
    <lineage>
        <taxon>Bacteria</taxon>
        <taxon>Pseudomonadati</taxon>
        <taxon>Pseudomonadota</taxon>
        <taxon>Gammaproteobacteria</taxon>
        <taxon>Pseudomonadales</taxon>
        <taxon>Pseudomonadaceae</taxon>
        <taxon>Pseudomonas</taxon>
    </lineage>
</organism>
<accession>Q9I263</accession>
<proteinExistence type="inferred from homology"/>
<reference key="1">
    <citation type="journal article" date="2000" name="Nature">
        <title>Complete genome sequence of Pseudomonas aeruginosa PAO1, an opportunistic pathogen.</title>
        <authorList>
            <person name="Stover C.K."/>
            <person name="Pham X.-Q.T."/>
            <person name="Erwin A.L."/>
            <person name="Mizoguchi S.D."/>
            <person name="Warrener P."/>
            <person name="Hickey M.J."/>
            <person name="Brinkman F.S.L."/>
            <person name="Hufnagle W.O."/>
            <person name="Kowalik D.J."/>
            <person name="Lagrou M."/>
            <person name="Garber R.L."/>
            <person name="Goltry L."/>
            <person name="Tolentino E."/>
            <person name="Westbrock-Wadman S."/>
            <person name="Yuan Y."/>
            <person name="Brody L.L."/>
            <person name="Coulter S.N."/>
            <person name="Folger K.R."/>
            <person name="Kas A."/>
            <person name="Larbig K."/>
            <person name="Lim R.M."/>
            <person name="Smith K.A."/>
            <person name="Spencer D.H."/>
            <person name="Wong G.K.-S."/>
            <person name="Wu Z."/>
            <person name="Paulsen I.T."/>
            <person name="Reizer J."/>
            <person name="Saier M.H. Jr."/>
            <person name="Hancock R.E.W."/>
            <person name="Lory S."/>
            <person name="Olson M.V."/>
        </authorList>
    </citation>
    <scope>NUCLEOTIDE SEQUENCE [LARGE SCALE GENOMIC DNA]</scope>
    <source>
        <strain>ATCC 15692 / DSM 22644 / CIP 104116 / JCM 14847 / LMG 12228 / 1C / PRS 101 / PAO1</strain>
    </source>
</reference>
<name>CYNS_PSEAE</name>
<gene>
    <name evidence="1" type="primary">cynS</name>
    <name type="ordered locus">PA2052</name>
</gene>
<feature type="chain" id="PRO_0000187528" description="Cyanate hydratase">
    <location>
        <begin position="1"/>
        <end position="156"/>
    </location>
</feature>
<feature type="active site" evidence="1">
    <location>
        <position position="96"/>
    </location>
</feature>
<feature type="active site" evidence="1">
    <location>
        <position position="99"/>
    </location>
</feature>
<feature type="active site" evidence="1">
    <location>
        <position position="122"/>
    </location>
</feature>
<dbReference type="EC" id="4.2.1.104" evidence="1"/>
<dbReference type="EMBL" id="AE004091">
    <property type="protein sequence ID" value="AAG05440.1"/>
    <property type="molecule type" value="Genomic_DNA"/>
</dbReference>
<dbReference type="PIR" id="C83390">
    <property type="entry name" value="C83390"/>
</dbReference>
<dbReference type="RefSeq" id="NP_250742.1">
    <property type="nucleotide sequence ID" value="NC_002516.2"/>
</dbReference>
<dbReference type="RefSeq" id="WP_003088707.1">
    <property type="nucleotide sequence ID" value="NZ_QZGE01000022.1"/>
</dbReference>
<dbReference type="SMR" id="Q9I263"/>
<dbReference type="FunCoup" id="Q9I263">
    <property type="interactions" value="222"/>
</dbReference>
<dbReference type="STRING" id="208964.PA2052"/>
<dbReference type="PaxDb" id="208964-PA2052"/>
<dbReference type="GeneID" id="877801"/>
<dbReference type="KEGG" id="pae:PA2052"/>
<dbReference type="PATRIC" id="fig|208964.12.peg.2140"/>
<dbReference type="PseudoCAP" id="PA2052"/>
<dbReference type="HOGENOM" id="CLU_103452_1_1_6"/>
<dbReference type="InParanoid" id="Q9I263"/>
<dbReference type="OrthoDB" id="9785870at2"/>
<dbReference type="PhylomeDB" id="Q9I263"/>
<dbReference type="BioCyc" id="PAER208964:G1FZ6-2090-MONOMER"/>
<dbReference type="Proteomes" id="UP000002438">
    <property type="component" value="Chromosome"/>
</dbReference>
<dbReference type="GO" id="GO:0008824">
    <property type="term" value="F:cyanate hydratase activity"/>
    <property type="evidence" value="ECO:0007669"/>
    <property type="project" value="UniProtKB-UniRule"/>
</dbReference>
<dbReference type="GO" id="GO:0003677">
    <property type="term" value="F:DNA binding"/>
    <property type="evidence" value="ECO:0007669"/>
    <property type="project" value="InterPro"/>
</dbReference>
<dbReference type="GO" id="GO:0009439">
    <property type="term" value="P:cyanate metabolic process"/>
    <property type="evidence" value="ECO:0007669"/>
    <property type="project" value="UniProtKB-UniRule"/>
</dbReference>
<dbReference type="CDD" id="cd00559">
    <property type="entry name" value="Cyanase_C"/>
    <property type="match status" value="1"/>
</dbReference>
<dbReference type="Gene3D" id="3.30.1160.10">
    <property type="entry name" value="Cyanate lyase, C-terminal domain"/>
    <property type="match status" value="1"/>
</dbReference>
<dbReference type="Gene3D" id="1.10.260.40">
    <property type="entry name" value="lambda repressor-like DNA-binding domains"/>
    <property type="match status" value="1"/>
</dbReference>
<dbReference type="HAMAP" id="MF_00535">
    <property type="entry name" value="Cyanate_hydrat"/>
    <property type="match status" value="1"/>
</dbReference>
<dbReference type="InterPro" id="IPR008076">
    <property type="entry name" value="Cyanase"/>
</dbReference>
<dbReference type="InterPro" id="IPR003712">
    <property type="entry name" value="Cyanate_lyase_C"/>
</dbReference>
<dbReference type="InterPro" id="IPR036581">
    <property type="entry name" value="Cyanate_lyase_C_sf"/>
</dbReference>
<dbReference type="InterPro" id="IPR048564">
    <property type="entry name" value="CYNS_N"/>
</dbReference>
<dbReference type="InterPro" id="IPR010982">
    <property type="entry name" value="Lambda_DNA-bd_dom_sf"/>
</dbReference>
<dbReference type="NCBIfam" id="TIGR00673">
    <property type="entry name" value="cynS"/>
    <property type="match status" value="1"/>
</dbReference>
<dbReference type="NCBIfam" id="NF002773">
    <property type="entry name" value="PRK02866.1"/>
    <property type="match status" value="1"/>
</dbReference>
<dbReference type="PANTHER" id="PTHR34186">
    <property type="entry name" value="CYANATE HYDRATASE"/>
    <property type="match status" value="1"/>
</dbReference>
<dbReference type="PANTHER" id="PTHR34186:SF2">
    <property type="entry name" value="CYANATE HYDRATASE"/>
    <property type="match status" value="1"/>
</dbReference>
<dbReference type="Pfam" id="PF02560">
    <property type="entry name" value="Cyanate_lyase"/>
    <property type="match status" value="1"/>
</dbReference>
<dbReference type="Pfam" id="PF21291">
    <property type="entry name" value="CYNS_N"/>
    <property type="match status" value="1"/>
</dbReference>
<dbReference type="PIRSF" id="PIRSF001263">
    <property type="entry name" value="Cyanate_hydratas"/>
    <property type="match status" value="1"/>
</dbReference>
<dbReference type="PRINTS" id="PR01693">
    <property type="entry name" value="CYANASE"/>
</dbReference>
<dbReference type="SMART" id="SM01116">
    <property type="entry name" value="Cyanate_lyase"/>
    <property type="match status" value="1"/>
</dbReference>
<dbReference type="SUPFAM" id="SSF55234">
    <property type="entry name" value="Cyanase C-terminal domain"/>
    <property type="match status" value="1"/>
</dbReference>
<dbReference type="SUPFAM" id="SSF47413">
    <property type="entry name" value="lambda repressor-like DNA-binding domains"/>
    <property type="match status" value="1"/>
</dbReference>
<comment type="function">
    <text evidence="1">Catalyzes the reaction of cyanate with bicarbonate to produce ammonia and carbon dioxide.</text>
</comment>
<comment type="catalytic activity">
    <reaction evidence="1">
        <text>cyanate + hydrogencarbonate + 3 H(+) = NH4(+) + 2 CO2</text>
        <dbReference type="Rhea" id="RHEA:11120"/>
        <dbReference type="ChEBI" id="CHEBI:15378"/>
        <dbReference type="ChEBI" id="CHEBI:16526"/>
        <dbReference type="ChEBI" id="CHEBI:17544"/>
        <dbReference type="ChEBI" id="CHEBI:28938"/>
        <dbReference type="ChEBI" id="CHEBI:29195"/>
        <dbReference type="EC" id="4.2.1.104"/>
    </reaction>
</comment>
<comment type="similarity">
    <text evidence="1">Belongs to the cyanase family.</text>
</comment>
<protein>
    <recommendedName>
        <fullName evidence="1">Cyanate hydratase</fullName>
        <shortName evidence="1">Cyanase</shortName>
        <ecNumber evidence="1">4.2.1.104</ecNumber>
    </recommendedName>
    <alternativeName>
        <fullName evidence="1">Cyanate hydrolase</fullName>
    </alternativeName>
    <alternativeName>
        <fullName evidence="1">Cyanate lyase</fullName>
    </alternativeName>
</protein>
<keyword id="KW-0456">Lyase</keyword>
<keyword id="KW-1185">Reference proteome</keyword>
<sequence length="156" mass="16751">MQHSQVSPNARQQLAETVVLNKARLGLSWQDLADGTGLALTFVTAALLGQHALPEAAARKVAAQLGLDDDAVLLLQSIPLRGSIPGGIPSDPTIYRFYEMLQVYGSTLKALVHEQFGDGIISAINFKLDIKKVEDPEGGSRAVITLDGKYLPTKPF</sequence>
<evidence type="ECO:0000255" key="1">
    <source>
        <dbReference type="HAMAP-Rule" id="MF_00535"/>
    </source>
</evidence>